<proteinExistence type="inferred from homology"/>
<organism>
    <name type="scientific">Rickettsia prowazekii (strain Madrid E)</name>
    <dbReference type="NCBI Taxonomy" id="272947"/>
    <lineage>
        <taxon>Bacteria</taxon>
        <taxon>Pseudomonadati</taxon>
        <taxon>Pseudomonadota</taxon>
        <taxon>Alphaproteobacteria</taxon>
        <taxon>Rickettsiales</taxon>
        <taxon>Rickettsiaceae</taxon>
        <taxon>Rickettsieae</taxon>
        <taxon>Rickettsia</taxon>
        <taxon>typhus group</taxon>
    </lineage>
</organism>
<name>Y167_RICPR</name>
<reference key="1">
    <citation type="journal article" date="1998" name="Nature">
        <title>The genome sequence of Rickettsia prowazekii and the origin of mitochondria.</title>
        <authorList>
            <person name="Andersson S.G.E."/>
            <person name="Zomorodipour A."/>
            <person name="Andersson J.O."/>
            <person name="Sicheritz-Ponten T."/>
            <person name="Alsmark U.C.M."/>
            <person name="Podowski R.M."/>
            <person name="Naeslund A.K."/>
            <person name="Eriksson A.-S."/>
            <person name="Winkler H.H."/>
            <person name="Kurland C.G."/>
        </authorList>
    </citation>
    <scope>NUCLEOTIDE SEQUENCE [LARGE SCALE GENOMIC DNA]</scope>
    <source>
        <strain>Madrid E</strain>
    </source>
</reference>
<accession>Q9ZDZ6</accession>
<dbReference type="EMBL" id="AJ235270">
    <property type="protein sequence ID" value="CAA14634.1"/>
    <property type="molecule type" value="Genomic_DNA"/>
</dbReference>
<dbReference type="PIR" id="C71727">
    <property type="entry name" value="C71727"/>
</dbReference>
<dbReference type="RefSeq" id="NP_220557.1">
    <property type="nucleotide sequence ID" value="NC_000963.1"/>
</dbReference>
<dbReference type="SMR" id="Q9ZDZ6"/>
<dbReference type="STRING" id="272947.gene:17555250"/>
<dbReference type="EnsemblBacteria" id="CAA14634">
    <property type="protein sequence ID" value="CAA14634"/>
    <property type="gene ID" value="CAA14634"/>
</dbReference>
<dbReference type="KEGG" id="rpr:RP167"/>
<dbReference type="PATRIC" id="fig|272947.5.peg.172"/>
<dbReference type="eggNOG" id="COG5508">
    <property type="taxonomic scope" value="Bacteria"/>
</dbReference>
<dbReference type="HOGENOM" id="CLU_2619753_0_0_5"/>
<dbReference type="OrthoDB" id="8481828at2"/>
<dbReference type="Proteomes" id="UP000002480">
    <property type="component" value="Chromosome"/>
</dbReference>
<dbReference type="InterPro" id="IPR012875">
    <property type="entry name" value="SDHF4"/>
</dbReference>
<dbReference type="Pfam" id="PF07896">
    <property type="entry name" value="DUF1674"/>
    <property type="match status" value="1"/>
</dbReference>
<feature type="chain" id="PRO_0000101325" description="UPF0369 protein RP167">
    <location>
        <begin position="1"/>
        <end position="78"/>
    </location>
</feature>
<sequence length="78" mass="8882">MLSNSLCPRLTNSLILSKLILVYQLFIFTGALIMDKQKVNNNIVEEENLSKEKEIGGIKGLEPTRYGDWQHKGKVTDF</sequence>
<comment type="similarity">
    <text evidence="1">Belongs to the SDHAF4 family.</text>
</comment>
<evidence type="ECO:0000305" key="1"/>
<protein>
    <recommendedName>
        <fullName>UPF0369 protein RP167</fullName>
    </recommendedName>
</protein>
<keyword id="KW-1185">Reference proteome</keyword>
<gene>
    <name type="ordered locus">RP167</name>
</gene>